<keyword id="KW-0963">Cytoplasm</keyword>
<keyword id="KW-0206">Cytoskeleton</keyword>
<keyword id="KW-0325">Glycoprotein</keyword>
<keyword id="KW-0378">Hydrolase</keyword>
<keyword id="KW-0443">Lipid metabolism</keyword>
<keyword id="KW-1185">Reference proteome</keyword>
<feature type="chain" id="PRO_0000076180" description="Phosphatidate phosphatase APP1">
    <location>
        <begin position="1"/>
        <end position="587"/>
    </location>
</feature>
<feature type="region of interest" description="Disordered" evidence="1">
    <location>
        <begin position="1"/>
        <end position="28"/>
    </location>
</feature>
<feature type="region of interest" description="Disordered" evidence="1">
    <location>
        <begin position="150"/>
        <end position="178"/>
    </location>
</feature>
<feature type="region of interest" description="Disordered" evidence="1">
    <location>
        <begin position="452"/>
        <end position="521"/>
    </location>
</feature>
<feature type="region of interest" description="Interaction with SH3 domain of ABP1">
    <location>
        <begin position="467"/>
        <end position="483"/>
    </location>
</feature>
<feature type="short sequence motif" description="DXDXT motif">
    <location>
        <begin position="281"/>
        <end position="285"/>
    </location>
</feature>
<feature type="compositionally biased region" description="Low complexity" evidence="1">
    <location>
        <begin position="9"/>
        <end position="22"/>
    </location>
</feature>
<feature type="compositionally biased region" description="Low complexity" evidence="1">
    <location>
        <begin position="163"/>
        <end position="174"/>
    </location>
</feature>
<feature type="mutagenesis site" description="Abolishes PAP activity." evidence="7">
    <original>D</original>
    <variation>E</variation>
    <location>
        <position position="281"/>
    </location>
</feature>
<accession>P53933</accession>
<accession>D6W186</accession>
<evidence type="ECO:0000256" key="1">
    <source>
        <dbReference type="SAM" id="MobiDB-lite"/>
    </source>
</evidence>
<evidence type="ECO:0000269" key="2">
    <source>
    </source>
</evidence>
<evidence type="ECO:0000269" key="3">
    <source>
    </source>
</evidence>
<evidence type="ECO:0000269" key="4">
    <source>
    </source>
</evidence>
<evidence type="ECO:0000269" key="5">
    <source>
    </source>
</evidence>
<evidence type="ECO:0000269" key="6">
    <source>
    </source>
</evidence>
<evidence type="ECO:0000269" key="7">
    <source>
    </source>
</evidence>
<evidence type="ECO:0000269" key="8">
    <source>
    </source>
</evidence>
<evidence type="ECO:0000305" key="9"/>
<evidence type="ECO:0000305" key="10">
    <source>
    </source>
</evidence>
<dbReference type="EC" id="3.1.3.4"/>
<dbReference type="EMBL" id="X85811">
    <property type="protein sequence ID" value="CAA59823.1"/>
    <property type="status" value="ALT_INIT"/>
    <property type="molecule type" value="Genomic_DNA"/>
</dbReference>
<dbReference type="EMBL" id="Z71370">
    <property type="protein sequence ID" value="CAA95970.1"/>
    <property type="molecule type" value="Genomic_DNA"/>
</dbReference>
<dbReference type="EMBL" id="BK006947">
    <property type="protein sequence ID" value="DAA10452.1"/>
    <property type="molecule type" value="Genomic_DNA"/>
</dbReference>
<dbReference type="PIR" id="S63033">
    <property type="entry name" value="S63033"/>
</dbReference>
<dbReference type="RefSeq" id="NP_014305.1">
    <property type="nucleotide sequence ID" value="NM_001182932.1"/>
</dbReference>
<dbReference type="BioGRID" id="35730">
    <property type="interactions" value="129"/>
</dbReference>
<dbReference type="DIP" id="DIP-2006N"/>
<dbReference type="FunCoup" id="P53933">
    <property type="interactions" value="102"/>
</dbReference>
<dbReference type="IntAct" id="P53933">
    <property type="interactions" value="44"/>
</dbReference>
<dbReference type="MINT" id="P53933"/>
<dbReference type="STRING" id="4932.YNL094W"/>
<dbReference type="SwissLipids" id="SLP:000001946"/>
<dbReference type="GlyGen" id="P53933">
    <property type="glycosylation" value="1 site"/>
</dbReference>
<dbReference type="PaxDb" id="4932-YNL094W"/>
<dbReference type="PeptideAtlas" id="P53933"/>
<dbReference type="EnsemblFungi" id="YNL094W_mRNA">
    <property type="protein sequence ID" value="YNL094W"/>
    <property type="gene ID" value="YNL094W"/>
</dbReference>
<dbReference type="GeneID" id="855630"/>
<dbReference type="KEGG" id="sce:YNL094W"/>
<dbReference type="AGR" id="SGD:S000005038"/>
<dbReference type="SGD" id="S000005038">
    <property type="gene designation" value="APP1"/>
</dbReference>
<dbReference type="VEuPathDB" id="FungiDB:YNL094W"/>
<dbReference type="eggNOG" id="ENOG502QT5E">
    <property type="taxonomic scope" value="Eukaryota"/>
</dbReference>
<dbReference type="HOGENOM" id="CLU_022324_0_0_1"/>
<dbReference type="InParanoid" id="P53933"/>
<dbReference type="OMA" id="IYIRCCK"/>
<dbReference type="OrthoDB" id="541883at2759"/>
<dbReference type="BioCyc" id="YEAST:G3O-33122-MONOMER"/>
<dbReference type="BioGRID-ORCS" id="855630">
    <property type="hits" value="0 hits in 10 CRISPR screens"/>
</dbReference>
<dbReference type="PRO" id="PR:P53933"/>
<dbReference type="Proteomes" id="UP000002311">
    <property type="component" value="Chromosome XIV"/>
</dbReference>
<dbReference type="RNAct" id="P53933">
    <property type="molecule type" value="protein"/>
</dbReference>
<dbReference type="GO" id="GO:0030479">
    <property type="term" value="C:actin cortical patch"/>
    <property type="evidence" value="ECO:0000314"/>
    <property type="project" value="SGD"/>
</dbReference>
<dbReference type="GO" id="GO:0008195">
    <property type="term" value="F:phosphatidate phosphatase activity"/>
    <property type="evidence" value="ECO:0000314"/>
    <property type="project" value="SGD"/>
</dbReference>
<dbReference type="GO" id="GO:0006629">
    <property type="term" value="P:lipid metabolic process"/>
    <property type="evidence" value="ECO:0000315"/>
    <property type="project" value="SGD"/>
</dbReference>
<dbReference type="InterPro" id="IPR017210">
    <property type="entry name" value="APP1"/>
</dbReference>
<dbReference type="InterPro" id="IPR019236">
    <property type="entry name" value="APP1_cat"/>
</dbReference>
<dbReference type="InterPro" id="IPR052935">
    <property type="entry name" value="Mg2+_PAP"/>
</dbReference>
<dbReference type="PANTHER" id="PTHR28208">
    <property type="entry name" value="PHOSPHATIDATE PHOSPHATASE APP1"/>
    <property type="match status" value="1"/>
</dbReference>
<dbReference type="PANTHER" id="PTHR28208:SF3">
    <property type="entry name" value="PHOSPHATIDATE PHOSPHATASE APP1"/>
    <property type="match status" value="1"/>
</dbReference>
<dbReference type="Pfam" id="PF09949">
    <property type="entry name" value="APP1_cat"/>
    <property type="match status" value="1"/>
</dbReference>
<dbReference type="PIRSF" id="PIRSF037464">
    <property type="entry name" value="UCP037464_APP1"/>
    <property type="match status" value="1"/>
</dbReference>
<comment type="function">
    <text evidence="7 8">Mg(2+)-dependent phosphatidate (PA) phosphatase which catalyzes the dephosphorylation of PA to yield diacylglycerol. May play a role in vesicular trafficking through its PAP activity at cortical actin patches (PubMed:23071111, PubMed:23335564). Can also utilize diacylglycerol pyrophosphate and lyso-PA as substrates with specificity constants 4- and 7-fold lower, respectively, when compared with PA (PubMed:23335564).</text>
</comment>
<comment type="catalytic activity">
    <reaction evidence="7">
        <text>a 1,2-diacyl-sn-glycero-3-phosphate + H2O = a 1,2-diacyl-sn-glycerol + phosphate</text>
        <dbReference type="Rhea" id="RHEA:27429"/>
        <dbReference type="ChEBI" id="CHEBI:15377"/>
        <dbReference type="ChEBI" id="CHEBI:17815"/>
        <dbReference type="ChEBI" id="CHEBI:43474"/>
        <dbReference type="ChEBI" id="CHEBI:58608"/>
        <dbReference type="EC" id="3.1.3.4"/>
    </reaction>
</comment>
<comment type="catalytic activity">
    <reaction evidence="8">
        <text>1,2-di-(9Z-octadecenoyl)-sn-glycero-3-phosphate + H2O = 1,2-di-(9Z-octadecenoyl)-sn-glycerol + phosphate</text>
        <dbReference type="Rhea" id="RHEA:43244"/>
        <dbReference type="ChEBI" id="CHEBI:15377"/>
        <dbReference type="ChEBI" id="CHEBI:43474"/>
        <dbReference type="ChEBI" id="CHEBI:52333"/>
        <dbReference type="ChEBI" id="CHEBI:74546"/>
    </reaction>
    <physiologicalReaction direction="left-to-right" evidence="10">
        <dbReference type="Rhea" id="RHEA:43245"/>
    </physiologicalReaction>
</comment>
<comment type="cofactor">
    <cofactor evidence="8">
        <name>Mg(2+)</name>
        <dbReference type="ChEBI" id="CHEBI:18420"/>
    </cofactor>
</comment>
<comment type="activity regulation">
    <text evidence="7">Inhibited by N-ethylmaleimide.</text>
</comment>
<comment type="biophysicochemical properties">
    <kinetics>
        <Vmax evidence="8">577.0 umol/min/mg enzyme</Vmax>
    </kinetics>
    <phDependence>
        <text evidence="8">Optimum pH is 7.5.</text>
    </phDependence>
    <temperatureDependence>
        <text evidence="8">Optimum temperature is 30 degrees Celsius.</text>
    </temperatureDependence>
</comment>
<comment type="subunit">
    <text evidence="5 8">Monomer (PubMed:23335564). Interacts with ABP1 (PubMed:14737190).</text>
</comment>
<comment type="interaction">
    <interactant intactId="EBI-28798">
        <id>P53933</id>
    </interactant>
    <interactant intactId="EBI-2036">
        <id>P15891</id>
        <label>ABP1</label>
    </interactant>
    <organismsDiffer>false</organismsDiffer>
    <experiments>12</experiments>
</comment>
<comment type="interaction">
    <interactant intactId="EBI-28798">
        <id>P53933</id>
    </interactant>
    <interactant intactId="EBI-3437">
        <id>P47068</id>
        <label>BBC1</label>
    </interactant>
    <organismsDiffer>false</organismsDiffer>
    <experiments>3</experiments>
</comment>
<comment type="interaction">
    <interactant intactId="EBI-28798">
        <id>P53933</id>
    </interactant>
    <interactant intactId="EBI-3889">
        <id>P38822</id>
        <label>BZZ1</label>
    </interactant>
    <organismsDiffer>false</organismsDiffer>
    <experiments>14</experiments>
</comment>
<comment type="interaction">
    <interactant intactId="EBI-28798">
        <id>P53933</id>
    </interactant>
    <interactant intactId="EBI-5412">
        <id>Q05080</id>
        <label>HOF1</label>
    </interactant>
    <organismsDiffer>false</organismsDiffer>
    <experiments>2</experiments>
</comment>
<comment type="interaction">
    <interactant intactId="EBI-28798">
        <id>P53933</id>
    </interactant>
    <interactant intactId="EBI-23329">
        <id>P53281</id>
        <label>LSB1</label>
    </interactant>
    <organismsDiffer>false</organismsDiffer>
    <experiments>4</experiments>
</comment>
<comment type="interaction">
    <interactant intactId="EBI-28798">
        <id>P53933</id>
    </interactant>
    <interactant intactId="EBI-22980">
        <id>P43603</id>
        <label>LSB3</label>
    </interactant>
    <organismsDiffer>false</organismsDiffer>
    <experiments>8</experiments>
</comment>
<comment type="interaction">
    <interactant intactId="EBI-28798">
        <id>P53933</id>
    </interactant>
    <interactant intactId="EBI-11687">
        <id>Q04439</id>
        <label>MYO5</label>
    </interactant>
    <organismsDiffer>false</organismsDiffer>
    <experiments>2</experiments>
</comment>
<comment type="interaction">
    <interactant intactId="EBI-28798">
        <id>P53933</id>
    </interactant>
    <interactant intactId="EBI-13206">
        <id>P80667</id>
        <label>PEX13</label>
    </interactant>
    <organismsDiffer>false</organismsDiffer>
    <experiments>2</experiments>
</comment>
<comment type="interaction">
    <interactant intactId="EBI-28798">
        <id>P53933</id>
    </interactant>
    <interactant intactId="EBI-35523">
        <id>Q06449</id>
        <label>PIN3</label>
    </interactant>
    <organismsDiffer>false</organismsDiffer>
    <experiments>4</experiments>
</comment>
<comment type="interaction">
    <interactant intactId="EBI-28798">
        <id>P53933</id>
    </interactant>
    <interactant intactId="EBI-14500">
        <id>P39743</id>
        <label>RVS167</label>
    </interactant>
    <organismsDiffer>false</organismsDiffer>
    <experiments>9</experiments>
</comment>
<comment type="interaction">
    <interactant intactId="EBI-28798">
        <id>P53933</id>
    </interactant>
    <interactant intactId="EBI-17313">
        <id>P32790</id>
        <label>SLA1</label>
    </interactant>
    <organismsDiffer>false</organismsDiffer>
    <experiments>4</experiments>
</comment>
<comment type="interaction">
    <interactant intactId="EBI-28798">
        <id>P53933</id>
    </interactant>
    <interactant intactId="EBI-24460">
        <id>P32793</id>
        <label>YSC84</label>
    </interactant>
    <organismsDiffer>false</organismsDiffer>
    <experiments>6</experiments>
</comment>
<comment type="subcellular location">
    <subcellularLocation>
        <location evidence="2 3">Cytoplasm</location>
        <location evidence="2 3">Cytoskeleton</location>
        <location evidence="2 3">Actin patch</location>
    </subcellularLocation>
</comment>
<comment type="domain">
    <text>Contains one Asp-Xaa-Asp-Xaa-Thr (DXDXT) motif, a catalytic motif essential for phosphatidate phosphatase activity.</text>
</comment>
<comment type="PTM">
    <text evidence="6">N-glycosylated.</text>
</comment>
<comment type="miscellaneous">
    <text evidence="4">Present with 2289 molecules/cell in log phase SD medium.</text>
</comment>
<comment type="sequence caution" evidence="9">
    <conflict type="erroneous initiation">
        <sequence resource="EMBL-CDS" id="CAA59823"/>
    </conflict>
    <text>Truncated N-terminus.</text>
</comment>
<name>APP1_YEAST</name>
<sequence length="587" mass="66134">MNSQGYDESSSSTAATSGPTSGDPRMGKKQRFMNLIRTTKDVYIPNLTSSISQKTMDGIRSTTNSFEGYNDLPMELPHNTTITYFPTYTTTNLVDPDGLSAPRKDFETTVRCAVSYPGNPTSRRNRWLLSLCKQYLRTGTAEADVAPVVPPHLEEDSGDLNDSQSSIESSLSSKSENRYSHMGIQEEDVLNERIQGFLSKKVPNTPVVVDLLPKDKLRGDTASFFGTTDSYGNLLIKAETDFLPSKINITLDTPIEGHADPISETFPANYVSPYGIGLISDIDDTIKHTGVTGDRRSMFRNVFIHDVQSWVIDGVPLWYKTLHDVADVDFFYVSNSPIQTFTLLKQYICANFPPGPIFLKQYSGNFFSTIMTSSANRKIQPIANILKDFPKKKFILVGDSGEHDLEAYTTTALQFPNQILAIYIRCCSNSMSDVPSHDEEVMNEVNNIIELQQRPMQMTKSTVRTRRRPPPPPIPSTQKPSLTEEQTESIRMSRRNKDENNAKRVAPPPLPNRQLPNLDANTYYVPSSQNDYGMYGAFMDKKADEWKRRVMDSIQKLSNQDTTLMFFSDPALSLEDSIRRIREKYSN</sequence>
<reference key="1">
    <citation type="journal article" date="1996" name="Yeast">
        <title>Sequence analysis of a 14.2 kb fragment of Saccharomyces cerevisiae chromosome XIV that includes the ypt53, tRNALeu and gsr m2 genes and four new open reading frames.</title>
        <authorList>
            <person name="Garcia-Cantalejo J.M."/>
            <person name="Boskovic J."/>
            <person name="Jimenez A."/>
        </authorList>
    </citation>
    <scope>NUCLEOTIDE SEQUENCE [GENOMIC DNA]</scope>
    <source>
        <strain>ATCC 96604 / S288c / FY1679</strain>
    </source>
</reference>
<reference key="2">
    <citation type="journal article" date="1997" name="Nature">
        <title>The nucleotide sequence of Saccharomyces cerevisiae chromosome XIV and its evolutionary implications.</title>
        <authorList>
            <person name="Philippsen P."/>
            <person name="Kleine K."/>
            <person name="Poehlmann R."/>
            <person name="Duesterhoeft A."/>
            <person name="Hamberg K."/>
            <person name="Hegemann J.H."/>
            <person name="Obermaier B."/>
            <person name="Urrestarazu L.A."/>
            <person name="Aert R."/>
            <person name="Albermann K."/>
            <person name="Altmann R."/>
            <person name="Andre B."/>
            <person name="Baladron V."/>
            <person name="Ballesta J.P.G."/>
            <person name="Becam A.-M."/>
            <person name="Beinhauer J.D."/>
            <person name="Boskovic J."/>
            <person name="Buitrago M.J."/>
            <person name="Bussereau F."/>
            <person name="Coster F."/>
            <person name="Crouzet M."/>
            <person name="D'Angelo M."/>
            <person name="Dal Pero F."/>
            <person name="De Antoni A."/>
            <person name="del Rey F."/>
            <person name="Doignon F."/>
            <person name="Domdey H."/>
            <person name="Dubois E."/>
            <person name="Fiedler T.A."/>
            <person name="Fleig U."/>
            <person name="Floeth M."/>
            <person name="Fritz C."/>
            <person name="Gaillardin C."/>
            <person name="Garcia-Cantalejo J.M."/>
            <person name="Glansdorff N."/>
            <person name="Goffeau A."/>
            <person name="Gueldener U."/>
            <person name="Herbert C.J."/>
            <person name="Heumann K."/>
            <person name="Heuss-Neitzel D."/>
            <person name="Hilbert H."/>
            <person name="Hinni K."/>
            <person name="Iraqui Houssaini I."/>
            <person name="Jacquet M."/>
            <person name="Jimenez A."/>
            <person name="Jonniaux J.-L."/>
            <person name="Karpfinger-Hartl L."/>
            <person name="Lanfranchi G."/>
            <person name="Lepingle A."/>
            <person name="Levesque H."/>
            <person name="Lyck R."/>
            <person name="Maftahi M."/>
            <person name="Mallet L."/>
            <person name="Maurer C.T.C."/>
            <person name="Messenguy F."/>
            <person name="Mewes H.-W."/>
            <person name="Moestl D."/>
            <person name="Nasr F."/>
            <person name="Nicaud J.-M."/>
            <person name="Niedenthal R.K."/>
            <person name="Pandolfo D."/>
            <person name="Pierard A."/>
            <person name="Piravandi E."/>
            <person name="Planta R.J."/>
            <person name="Pohl T.M."/>
            <person name="Purnelle B."/>
            <person name="Rebischung C."/>
            <person name="Remacha M.A."/>
            <person name="Revuelta J.L."/>
            <person name="Rinke M."/>
            <person name="Saiz J.E."/>
            <person name="Sartorello F."/>
            <person name="Scherens B."/>
            <person name="Sen-Gupta M."/>
            <person name="Soler-Mira A."/>
            <person name="Urbanus J.H.M."/>
            <person name="Valle G."/>
            <person name="Van Dyck L."/>
            <person name="Verhasselt P."/>
            <person name="Vierendeels F."/>
            <person name="Vissers S."/>
            <person name="Voet M."/>
            <person name="Volckaert G."/>
            <person name="Wach A."/>
            <person name="Wambutt R."/>
            <person name="Wedler H."/>
            <person name="Zollner A."/>
            <person name="Hani J."/>
        </authorList>
    </citation>
    <scope>NUCLEOTIDE SEQUENCE [LARGE SCALE GENOMIC DNA]</scope>
    <source>
        <strain>ATCC 204508 / S288c</strain>
    </source>
</reference>
<reference key="3">
    <citation type="journal article" date="2014" name="G3 (Bethesda)">
        <title>The reference genome sequence of Saccharomyces cerevisiae: Then and now.</title>
        <authorList>
            <person name="Engel S.R."/>
            <person name="Dietrich F.S."/>
            <person name="Fisk D.G."/>
            <person name="Binkley G."/>
            <person name="Balakrishnan R."/>
            <person name="Costanzo M.C."/>
            <person name="Dwight S.S."/>
            <person name="Hitz B.C."/>
            <person name="Karra K."/>
            <person name="Nash R.S."/>
            <person name="Weng S."/>
            <person name="Wong E.D."/>
            <person name="Lloyd P."/>
            <person name="Skrzypek M.S."/>
            <person name="Miyasato S.R."/>
            <person name="Simison M."/>
            <person name="Cherry J.M."/>
        </authorList>
    </citation>
    <scope>GENOME REANNOTATION</scope>
    <source>
        <strain>ATCC 204508 / S288c</strain>
    </source>
</reference>
<reference key="4">
    <citation type="journal article" date="2001" name="J. Cell Biol.">
        <title>A protein interaction map for cell polarity development.</title>
        <authorList>
            <person name="Drees B.L."/>
            <person name="Sundin B.A."/>
            <person name="Brazeau E."/>
            <person name="Caviston J.P."/>
            <person name="Chen G.-C."/>
            <person name="Guo W."/>
            <person name="Kozminski K.G."/>
            <person name="Lau M.W."/>
            <person name="Moskow J.J."/>
            <person name="Tong A."/>
            <person name="Schenkman L.R."/>
            <person name="McKenzie A. III"/>
            <person name="Brennwald P.J."/>
            <person name="Longtine M."/>
            <person name="Bi E."/>
            <person name="Chan C."/>
            <person name="Novick P."/>
            <person name="Boone C."/>
            <person name="Pringle J.R."/>
            <person name="Davis T.N."/>
            <person name="Fields S."/>
            <person name="Drubin D.G."/>
        </authorList>
    </citation>
    <scope>SUBCELLULAR LOCATION</scope>
</reference>
<reference key="5">
    <citation type="journal article" date="2003" name="Nature">
        <title>Global analysis of protein localization in budding yeast.</title>
        <authorList>
            <person name="Huh W.-K."/>
            <person name="Falvo J.V."/>
            <person name="Gerke L.C."/>
            <person name="Carroll A.S."/>
            <person name="Howson R.W."/>
            <person name="Weissman J.S."/>
            <person name="O'Shea E.K."/>
        </authorList>
    </citation>
    <scope>SUBCELLULAR LOCATION [LARGE SCALE ANALYSIS]</scope>
</reference>
<reference key="6">
    <citation type="journal article" date="2003" name="Nature">
        <title>Global analysis of protein expression in yeast.</title>
        <authorList>
            <person name="Ghaemmaghami S."/>
            <person name="Huh W.-K."/>
            <person name="Bower K."/>
            <person name="Howson R.W."/>
            <person name="Belle A."/>
            <person name="Dephoure N."/>
            <person name="O'Shea E.K."/>
            <person name="Weissman J.S."/>
        </authorList>
    </citation>
    <scope>LEVEL OF PROTEIN EXPRESSION [LARGE SCALE ANALYSIS]</scope>
</reference>
<reference key="7">
    <citation type="journal article" date="2004" name="PLoS Biol.">
        <title>Protein interaction networks by proteome peptide scanning.</title>
        <authorList>
            <person name="Landgraf C."/>
            <person name="Panni S."/>
            <person name="Montecchi-Palazzi L."/>
            <person name="Castagnoli L."/>
            <person name="Schneider-Mergener J."/>
            <person name="Volkmer-Engert R."/>
            <person name="Cesareni G."/>
        </authorList>
    </citation>
    <scope>INTERACTION WITH ABP1</scope>
</reference>
<reference key="8">
    <citation type="journal article" date="2009" name="Mol. Syst. Biol.">
        <title>Global analysis of the glycoproteome in Saccharomyces cerevisiae reveals new roles for protein glycosylation in eukaryotes.</title>
        <authorList>
            <person name="Kung L.A."/>
            <person name="Tao S.-C."/>
            <person name="Qian J."/>
            <person name="Smith M.G."/>
            <person name="Snyder M."/>
            <person name="Zhu H."/>
        </authorList>
    </citation>
    <scope>GLYCOSYLATION [LARGE SCALE ANALYSIS]</scope>
</reference>
<reference key="9">
    <citation type="journal article" date="2012" name="J. Biol. Chem.">
        <title>The Saccharomyces cerevisiae actin patch protein App1p is a phosphatidate phosphatase enzyme.</title>
        <authorList>
            <person name="Chae M."/>
            <person name="Han G.S."/>
            <person name="Carman G.M."/>
        </authorList>
    </citation>
    <scope>FUNCTION</scope>
    <scope>CATALYTIC ACTIVITY</scope>
    <scope>ACTIVITY REGULATION</scope>
    <scope>MUTAGENESIS OF ASP-281</scope>
</reference>
<reference key="10">
    <citation type="journal article" date="2013" name="J. Biol. Chem.">
        <title>Characterization of the yeast actin patch protein App1p phosphatidate phosphatase.</title>
        <authorList>
            <person name="Chae M."/>
            <person name="Carman G.M."/>
        </authorList>
    </citation>
    <scope>FUNCTION</scope>
    <scope>CATALYTIC ACTIVITY</scope>
    <scope>BIOPHYSICOCHEMICAL PROPERTIES</scope>
    <scope>COFACTOR</scope>
    <scope>SUBUNIT</scope>
</reference>
<gene>
    <name type="primary">APP1</name>
    <name type="ordered locus">YNL094W</name>
    <name type="ORF">N2219</name>
</gene>
<organism>
    <name type="scientific">Saccharomyces cerevisiae (strain ATCC 204508 / S288c)</name>
    <name type="common">Baker's yeast</name>
    <dbReference type="NCBI Taxonomy" id="559292"/>
    <lineage>
        <taxon>Eukaryota</taxon>
        <taxon>Fungi</taxon>
        <taxon>Dikarya</taxon>
        <taxon>Ascomycota</taxon>
        <taxon>Saccharomycotina</taxon>
        <taxon>Saccharomycetes</taxon>
        <taxon>Saccharomycetales</taxon>
        <taxon>Saccharomycetaceae</taxon>
        <taxon>Saccharomyces</taxon>
    </lineage>
</organism>
<proteinExistence type="evidence at protein level"/>
<protein>
    <recommendedName>
        <fullName>Phosphatidate phosphatase APP1</fullName>
        <shortName>PAP</shortName>
        <ecNumber>3.1.3.4</ecNumber>
    </recommendedName>
    <alternativeName>
        <fullName>Actin patch protein 1</fullName>
    </alternativeName>
</protein>